<dbReference type="EMBL" id="CP000230">
    <property type="protein sequence ID" value="ABC20908.1"/>
    <property type="molecule type" value="Genomic_DNA"/>
</dbReference>
<dbReference type="RefSeq" id="WP_011387864.1">
    <property type="nucleotide sequence ID" value="NC_007643.1"/>
</dbReference>
<dbReference type="RefSeq" id="YP_425195.1">
    <property type="nucleotide sequence ID" value="NC_007643.1"/>
</dbReference>
<dbReference type="SMR" id="Q2RY87"/>
<dbReference type="STRING" id="269796.Rru_A0103"/>
<dbReference type="EnsemblBacteria" id="ABC20908">
    <property type="protein sequence ID" value="ABC20908"/>
    <property type="gene ID" value="Rru_A0103"/>
</dbReference>
<dbReference type="KEGG" id="rru:Rru_A0103"/>
<dbReference type="PATRIC" id="fig|269796.9.peg.156"/>
<dbReference type="eggNOG" id="COG2900">
    <property type="taxonomic scope" value="Bacteria"/>
</dbReference>
<dbReference type="HOGENOM" id="CLU_180796_5_2_5"/>
<dbReference type="PhylomeDB" id="Q2RY87"/>
<dbReference type="Proteomes" id="UP000001929">
    <property type="component" value="Chromosome"/>
</dbReference>
<dbReference type="Gene3D" id="1.20.5.300">
    <property type="match status" value="1"/>
</dbReference>
<dbReference type="HAMAP" id="MF_00715">
    <property type="entry name" value="SlyX"/>
    <property type="match status" value="1"/>
</dbReference>
<dbReference type="InterPro" id="IPR007236">
    <property type="entry name" value="SlyX"/>
</dbReference>
<dbReference type="PANTHER" id="PTHR36508">
    <property type="entry name" value="PROTEIN SLYX"/>
    <property type="match status" value="1"/>
</dbReference>
<dbReference type="PANTHER" id="PTHR36508:SF1">
    <property type="entry name" value="PROTEIN SLYX"/>
    <property type="match status" value="1"/>
</dbReference>
<dbReference type="Pfam" id="PF04102">
    <property type="entry name" value="SlyX"/>
    <property type="match status" value="1"/>
</dbReference>
<organism>
    <name type="scientific">Rhodospirillum rubrum (strain ATCC 11170 / ATH 1.1.1 / DSM 467 / LMG 4362 / NCIMB 8255 / S1)</name>
    <dbReference type="NCBI Taxonomy" id="269796"/>
    <lineage>
        <taxon>Bacteria</taxon>
        <taxon>Pseudomonadati</taxon>
        <taxon>Pseudomonadota</taxon>
        <taxon>Alphaproteobacteria</taxon>
        <taxon>Rhodospirillales</taxon>
        <taxon>Rhodospirillaceae</taxon>
        <taxon>Rhodospirillum</taxon>
    </lineage>
</organism>
<protein>
    <recommendedName>
        <fullName evidence="1">Protein SlyX homolog</fullName>
    </recommendedName>
</protein>
<evidence type="ECO:0000255" key="1">
    <source>
        <dbReference type="HAMAP-Rule" id="MF_00715"/>
    </source>
</evidence>
<proteinExistence type="inferred from homology"/>
<sequence>MPSALESRLIDLESRLTHQEAMVDDLSDVIAAQDRTIARLVVQIRHLAGALRDVELGSIGSPADDKPPPHY</sequence>
<reference key="1">
    <citation type="journal article" date="2011" name="Stand. Genomic Sci.">
        <title>Complete genome sequence of Rhodospirillum rubrum type strain (S1).</title>
        <authorList>
            <person name="Munk A.C."/>
            <person name="Copeland A."/>
            <person name="Lucas S."/>
            <person name="Lapidus A."/>
            <person name="Del Rio T.G."/>
            <person name="Barry K."/>
            <person name="Detter J.C."/>
            <person name="Hammon N."/>
            <person name="Israni S."/>
            <person name="Pitluck S."/>
            <person name="Brettin T."/>
            <person name="Bruce D."/>
            <person name="Han C."/>
            <person name="Tapia R."/>
            <person name="Gilna P."/>
            <person name="Schmutz J."/>
            <person name="Larimer F."/>
            <person name="Land M."/>
            <person name="Kyrpides N.C."/>
            <person name="Mavromatis K."/>
            <person name="Richardson P."/>
            <person name="Rohde M."/>
            <person name="Goeker M."/>
            <person name="Klenk H.P."/>
            <person name="Zhang Y."/>
            <person name="Roberts G.P."/>
            <person name="Reslewic S."/>
            <person name="Schwartz D.C."/>
        </authorList>
    </citation>
    <scope>NUCLEOTIDE SEQUENCE [LARGE SCALE GENOMIC DNA]</scope>
    <source>
        <strain>ATCC 11170 / ATH 1.1.1 / DSM 467 / LMG 4362 / NCIMB 8255 / S1</strain>
    </source>
</reference>
<keyword id="KW-1185">Reference proteome</keyword>
<accession>Q2RY87</accession>
<comment type="similarity">
    <text evidence="1">Belongs to the SlyX family.</text>
</comment>
<gene>
    <name evidence="1" type="primary">slyX</name>
    <name type="ordered locus">Rru_A0103</name>
</gene>
<name>SLYX_RHORT</name>
<feature type="chain" id="PRO_1000195848" description="Protein SlyX homolog">
    <location>
        <begin position="1"/>
        <end position="71"/>
    </location>
</feature>